<comment type="function">
    <text evidence="1">Catalyzes the isomerization of sedoheptulose 7-phosphate in D-glycero-D-manno-heptose 7-phosphate.</text>
</comment>
<comment type="catalytic activity">
    <reaction evidence="1">
        <text>2 D-sedoheptulose 7-phosphate = D-glycero-alpha-D-manno-heptose 7-phosphate + D-glycero-beta-D-manno-heptose 7-phosphate</text>
        <dbReference type="Rhea" id="RHEA:27489"/>
        <dbReference type="ChEBI" id="CHEBI:57483"/>
        <dbReference type="ChEBI" id="CHEBI:60203"/>
        <dbReference type="ChEBI" id="CHEBI:60204"/>
        <dbReference type="EC" id="5.3.1.28"/>
    </reaction>
</comment>
<comment type="cofactor">
    <cofactor evidence="1">
        <name>Zn(2+)</name>
        <dbReference type="ChEBI" id="CHEBI:29105"/>
    </cofactor>
    <text evidence="1">Binds 1 zinc ion per subunit.</text>
</comment>
<comment type="pathway">
    <text evidence="1">Carbohydrate biosynthesis; D-glycero-D-manno-heptose 7-phosphate biosynthesis; D-glycero-alpha-D-manno-heptose 7-phosphate and D-glycero-beta-D-manno-heptose 7-phosphate from sedoheptulose 7-phosphate: step 1/1.</text>
</comment>
<comment type="pathway">
    <text>Bacterial outer membrane biogenesis; LPS core biosynthesis.</text>
</comment>
<comment type="subunit">
    <text evidence="1">Homotetramer.</text>
</comment>
<comment type="subcellular location">
    <subcellularLocation>
        <location evidence="1">Cytoplasm</location>
    </subcellularLocation>
</comment>
<comment type="miscellaneous">
    <text evidence="1">The reaction produces a racemic mixture of D-glycero-alpha-D-manno-heptose 7-phosphate and D-glycero-beta-D-manno-heptose 7-phosphate.</text>
</comment>
<comment type="similarity">
    <text evidence="1">Belongs to the SIS family. GmhA subfamily.</text>
</comment>
<comment type="sequence caution" evidence="2">
    <conflict type="erroneous initiation">
        <sequence resource="EMBL-CDS" id="AAN78853"/>
    </conflict>
</comment>
<reference key="1">
    <citation type="journal article" date="2002" name="Proc. Natl. Acad. Sci. U.S.A.">
        <title>Extensive mosaic structure revealed by the complete genome sequence of uropathogenic Escherichia coli.</title>
        <authorList>
            <person name="Welch R.A."/>
            <person name="Burland V."/>
            <person name="Plunkett G. III"/>
            <person name="Redford P."/>
            <person name="Roesch P."/>
            <person name="Rasko D."/>
            <person name="Buckles E.L."/>
            <person name="Liou S.-R."/>
            <person name="Boutin A."/>
            <person name="Hackett J."/>
            <person name="Stroud D."/>
            <person name="Mayhew G.F."/>
            <person name="Rose D.J."/>
            <person name="Zhou S."/>
            <person name="Schwartz D.C."/>
            <person name="Perna N.T."/>
            <person name="Mobley H.L.T."/>
            <person name="Donnenberg M.S."/>
            <person name="Blattner F.R."/>
        </authorList>
    </citation>
    <scope>NUCLEOTIDE SEQUENCE [LARGE SCALE GENOMIC DNA]</scope>
    <source>
        <strain>CFT073 / ATCC 700928 / UPEC</strain>
    </source>
</reference>
<feature type="chain" id="PRO_0000136528" description="Phosphoheptose isomerase">
    <location>
        <begin position="1"/>
        <end position="192"/>
    </location>
</feature>
<feature type="domain" description="SIS" evidence="1">
    <location>
        <begin position="37"/>
        <end position="192"/>
    </location>
</feature>
<feature type="binding site" evidence="1">
    <location>
        <begin position="52"/>
        <end position="54"/>
    </location>
    <ligand>
        <name>substrate</name>
    </ligand>
</feature>
<feature type="binding site" evidence="1">
    <location>
        <position position="61"/>
    </location>
    <ligand>
        <name>Zn(2+)</name>
        <dbReference type="ChEBI" id="CHEBI:29105"/>
    </ligand>
</feature>
<feature type="binding site" evidence="1">
    <location>
        <position position="65"/>
    </location>
    <ligand>
        <name>substrate</name>
    </ligand>
</feature>
<feature type="binding site" evidence="1">
    <location>
        <position position="65"/>
    </location>
    <ligand>
        <name>Zn(2+)</name>
        <dbReference type="ChEBI" id="CHEBI:29105"/>
    </ligand>
</feature>
<feature type="binding site" evidence="1">
    <location>
        <begin position="93"/>
        <end position="94"/>
    </location>
    <ligand>
        <name>substrate</name>
    </ligand>
</feature>
<feature type="binding site" evidence="1">
    <location>
        <begin position="119"/>
        <end position="121"/>
    </location>
    <ligand>
        <name>substrate</name>
    </ligand>
</feature>
<feature type="binding site" evidence="1">
    <location>
        <position position="124"/>
    </location>
    <ligand>
        <name>substrate</name>
    </ligand>
</feature>
<feature type="binding site" evidence="1">
    <location>
        <position position="172"/>
    </location>
    <ligand>
        <name>substrate</name>
    </ligand>
</feature>
<feature type="binding site" evidence="1">
    <location>
        <position position="172"/>
    </location>
    <ligand>
        <name>Zn(2+)</name>
        <dbReference type="ChEBI" id="CHEBI:29105"/>
    </ligand>
</feature>
<feature type="binding site" evidence="1">
    <location>
        <position position="180"/>
    </location>
    <ligand>
        <name>Zn(2+)</name>
        <dbReference type="ChEBI" id="CHEBI:29105"/>
    </ligand>
</feature>
<sequence>MYQDLIRNELNEAAETLANFLKDDANIHAIQRAAVLLADSFKAGGKVLSCGNGGSHCDAMHFAEELTGRYRENRPGYPAIAISDVSHISCVGNDFGFNDIFSRYVEAVGREGDVLLGISTSGNSANVIKAIAAAREKGMKVITLTGKDGGKMAGTADIEIRVPHFGYADRIQEIHIKVIHILIQLIEKEMVK</sequence>
<proteinExistence type="inferred from homology"/>
<keyword id="KW-0119">Carbohydrate metabolism</keyword>
<keyword id="KW-0963">Cytoplasm</keyword>
<keyword id="KW-0413">Isomerase</keyword>
<keyword id="KW-0448">Lipopolysaccharide biosynthesis</keyword>
<keyword id="KW-0479">Metal-binding</keyword>
<keyword id="KW-1185">Reference proteome</keyword>
<keyword id="KW-0862">Zinc</keyword>
<evidence type="ECO:0000255" key="1">
    <source>
        <dbReference type="HAMAP-Rule" id="MF_00067"/>
    </source>
</evidence>
<evidence type="ECO:0000305" key="2"/>
<organism>
    <name type="scientific">Escherichia coli O6:H1 (strain CFT073 / ATCC 700928 / UPEC)</name>
    <dbReference type="NCBI Taxonomy" id="199310"/>
    <lineage>
        <taxon>Bacteria</taxon>
        <taxon>Pseudomonadati</taxon>
        <taxon>Pseudomonadota</taxon>
        <taxon>Gammaproteobacteria</taxon>
        <taxon>Enterobacterales</taxon>
        <taxon>Enterobacteriaceae</taxon>
        <taxon>Escherichia</taxon>
    </lineage>
</organism>
<protein>
    <recommendedName>
        <fullName evidence="1">Phosphoheptose isomerase</fullName>
        <ecNumber evidence="1">5.3.1.28</ecNumber>
    </recommendedName>
    <alternativeName>
        <fullName evidence="1">Sedoheptulose 7-phosphate isomerase</fullName>
    </alternativeName>
</protein>
<name>GMHA_ECOL6</name>
<accession>P63226</accession>
<accession>P51001</accession>
<dbReference type="EC" id="5.3.1.28" evidence="1"/>
<dbReference type="EMBL" id="AE014075">
    <property type="protein sequence ID" value="AAN78853.1"/>
    <property type="status" value="ALT_INIT"/>
    <property type="molecule type" value="Genomic_DNA"/>
</dbReference>
<dbReference type="SMR" id="P63226"/>
<dbReference type="STRING" id="199310.c0372"/>
<dbReference type="KEGG" id="ecc:c0372"/>
<dbReference type="eggNOG" id="COG0279">
    <property type="taxonomic scope" value="Bacteria"/>
</dbReference>
<dbReference type="HOGENOM" id="CLU_080999_4_0_6"/>
<dbReference type="UniPathway" id="UPA00041">
    <property type="reaction ID" value="UER00436"/>
</dbReference>
<dbReference type="UniPathway" id="UPA00958"/>
<dbReference type="Proteomes" id="UP000001410">
    <property type="component" value="Chromosome"/>
</dbReference>
<dbReference type="GO" id="GO:0005737">
    <property type="term" value="C:cytoplasm"/>
    <property type="evidence" value="ECO:0007669"/>
    <property type="project" value="UniProtKB-SubCell"/>
</dbReference>
<dbReference type="GO" id="GO:0097367">
    <property type="term" value="F:carbohydrate derivative binding"/>
    <property type="evidence" value="ECO:0007669"/>
    <property type="project" value="InterPro"/>
</dbReference>
<dbReference type="GO" id="GO:0008968">
    <property type="term" value="F:D-sedoheptulose 7-phosphate isomerase activity"/>
    <property type="evidence" value="ECO:0007669"/>
    <property type="project" value="UniProtKB-UniRule"/>
</dbReference>
<dbReference type="GO" id="GO:0008270">
    <property type="term" value="F:zinc ion binding"/>
    <property type="evidence" value="ECO:0007669"/>
    <property type="project" value="UniProtKB-UniRule"/>
</dbReference>
<dbReference type="GO" id="GO:2001061">
    <property type="term" value="P:D-glycero-D-manno-heptose 7-phosphate biosynthetic process"/>
    <property type="evidence" value="ECO:0007669"/>
    <property type="project" value="UniProtKB-UniPathway"/>
</dbReference>
<dbReference type="GO" id="GO:0009244">
    <property type="term" value="P:lipopolysaccharide core region biosynthetic process"/>
    <property type="evidence" value="ECO:0007669"/>
    <property type="project" value="UniProtKB-UniPathway"/>
</dbReference>
<dbReference type="CDD" id="cd05006">
    <property type="entry name" value="SIS_GmhA"/>
    <property type="match status" value="1"/>
</dbReference>
<dbReference type="FunFam" id="3.40.50.10490:FF:000013">
    <property type="entry name" value="Phosphoheptose isomerase"/>
    <property type="match status" value="1"/>
</dbReference>
<dbReference type="Gene3D" id="3.40.50.10490">
    <property type="entry name" value="Glucose-6-phosphate isomerase like protein, domain 1"/>
    <property type="match status" value="1"/>
</dbReference>
<dbReference type="HAMAP" id="MF_00067">
    <property type="entry name" value="GmhA"/>
    <property type="match status" value="1"/>
</dbReference>
<dbReference type="InterPro" id="IPR035461">
    <property type="entry name" value="GmhA/DiaA"/>
</dbReference>
<dbReference type="InterPro" id="IPR004515">
    <property type="entry name" value="Phosphoheptose_Isoase"/>
</dbReference>
<dbReference type="InterPro" id="IPR001347">
    <property type="entry name" value="SIS_dom"/>
</dbReference>
<dbReference type="InterPro" id="IPR046348">
    <property type="entry name" value="SIS_dom_sf"/>
</dbReference>
<dbReference type="InterPro" id="IPR050099">
    <property type="entry name" value="SIS_GmhA/DiaA_subfam"/>
</dbReference>
<dbReference type="NCBIfam" id="TIGR00441">
    <property type="entry name" value="gmhA"/>
    <property type="match status" value="1"/>
</dbReference>
<dbReference type="NCBIfam" id="NF001628">
    <property type="entry name" value="PRK00414.1"/>
    <property type="match status" value="1"/>
</dbReference>
<dbReference type="PANTHER" id="PTHR30390:SF7">
    <property type="entry name" value="PHOSPHOHEPTOSE ISOMERASE"/>
    <property type="match status" value="1"/>
</dbReference>
<dbReference type="PANTHER" id="PTHR30390">
    <property type="entry name" value="SEDOHEPTULOSE 7-PHOSPHATE ISOMERASE / DNAA INITIATOR-ASSOCIATING FACTOR FOR REPLICATION INITIATION"/>
    <property type="match status" value="1"/>
</dbReference>
<dbReference type="Pfam" id="PF13580">
    <property type="entry name" value="SIS_2"/>
    <property type="match status" value="1"/>
</dbReference>
<dbReference type="SUPFAM" id="SSF53697">
    <property type="entry name" value="SIS domain"/>
    <property type="match status" value="1"/>
</dbReference>
<dbReference type="PROSITE" id="PS51464">
    <property type="entry name" value="SIS"/>
    <property type="match status" value="1"/>
</dbReference>
<gene>
    <name evidence="1" type="primary">gmhA</name>
    <name type="ordered locus">c0372</name>
</gene>